<name>CAPSP_ASFK5</name>
<dbReference type="EMBL" id="AY261360">
    <property type="status" value="NOT_ANNOTATED_CDS"/>
    <property type="molecule type" value="Genomic_DNA"/>
</dbReference>
<dbReference type="SMR" id="P0CAA7"/>
<dbReference type="Proteomes" id="UP000000861">
    <property type="component" value="Segment"/>
</dbReference>
<dbReference type="GO" id="GO:0044423">
    <property type="term" value="C:virion component"/>
    <property type="evidence" value="ECO:0007669"/>
    <property type="project" value="UniProtKB-KW"/>
</dbReference>
<gene>
    <name type="ordered locus">Ken-132</name>
</gene>
<feature type="chain" id="PRO_0000373600" description="Penton protein H240R">
    <location>
        <begin position="1"/>
        <end position="236"/>
    </location>
</feature>
<comment type="function">
    <text evidence="1">Forms the penton at the fivefold vertices of the icosahedral capsid (By similarity). Together with the minor capsid proteins (p17, p49, and M1249L), forms a complicated network immediately below the outer capsid shell, stabilizing the whole capsid (By similarity).</text>
</comment>
<comment type="subcellular location">
    <subcellularLocation>
        <location evidence="1">Virion</location>
    </subcellularLocation>
</comment>
<comment type="induction">
    <text evidence="2">Expressed in the late phase of the viral replicative cycle.</text>
</comment>
<comment type="similarity">
    <text evidence="2">Belongs to the asfivirus H240R family.</text>
</comment>
<evidence type="ECO:0000250" key="1">
    <source>
        <dbReference type="UniProtKB" id="Q65190"/>
    </source>
</evidence>
<evidence type="ECO:0000305" key="2"/>
<protein>
    <recommendedName>
        <fullName evidence="1">Penton protein H240R</fullName>
        <shortName>pH240R</shortName>
    </recommendedName>
</protein>
<reference key="1">
    <citation type="submission" date="2003-03" db="EMBL/GenBank/DDBJ databases">
        <title>African swine fever virus genomes.</title>
        <authorList>
            <person name="Kutish G.F."/>
            <person name="Rock D.L."/>
        </authorList>
    </citation>
    <scope>NUCLEOTIDE SEQUENCE [LARGE SCALE GENOMIC DNA]</scope>
</reference>
<sequence length="236" mass="27102">MATRAATKMAGKKEHQYCLLDTQEKRHGHYPFSFELKPYGQTGANIIGVQGSLTHVVKMTVFPFMIPFPLQKTRIGDFIGGRVYLFFKELDMQAFSDVNGMQYHFEFKVVPVSSSQVELLPVNNTYKFTYAIPELQYLTPIFYDLSGPLDFPLDTLSVHVDSLTHHIHLPIQNHNLTMGDRVFVSGYKHLQTIETCKNNIIFIKDIPPLSSEKINLYIPKNRIRIPLYFKSLKASK</sequence>
<proteinExistence type="inferred from homology"/>
<organism>
    <name type="scientific">African swine fever virus (isolate Pig/Kenya/KEN-50/1950)</name>
    <name type="common">ASFV</name>
    <dbReference type="NCBI Taxonomy" id="561445"/>
    <lineage>
        <taxon>Viruses</taxon>
        <taxon>Varidnaviria</taxon>
        <taxon>Bamfordvirae</taxon>
        <taxon>Nucleocytoviricota</taxon>
        <taxon>Pokkesviricetes</taxon>
        <taxon>Asfuvirales</taxon>
        <taxon>Asfarviridae</taxon>
        <taxon>Asfivirus</taxon>
        <taxon>African swine fever virus</taxon>
    </lineage>
</organism>
<organismHost>
    <name type="scientific">Ornithodoros</name>
    <name type="common">relapsing fever ticks</name>
    <dbReference type="NCBI Taxonomy" id="6937"/>
</organismHost>
<organismHost>
    <name type="scientific">Phacochoerus aethiopicus</name>
    <name type="common">Warthog</name>
    <dbReference type="NCBI Taxonomy" id="85517"/>
</organismHost>
<organismHost>
    <name type="scientific">Phacochoerus africanus</name>
    <name type="common">Warthog</name>
    <dbReference type="NCBI Taxonomy" id="41426"/>
</organismHost>
<organismHost>
    <name type="scientific">Potamochoerus larvatus</name>
    <name type="common">Bushpig</name>
    <dbReference type="NCBI Taxonomy" id="273792"/>
</organismHost>
<organismHost>
    <name type="scientific">Sus scrofa</name>
    <name type="common">Pig</name>
    <dbReference type="NCBI Taxonomy" id="9823"/>
</organismHost>
<keyword id="KW-0426">Late protein</keyword>
<keyword id="KW-0946">Virion</keyword>
<accession>P0CAA7</accession>